<dbReference type="EC" id="1.14.13.9" evidence="2"/>
<dbReference type="EMBL" id="X79489">
    <property type="protein sequence ID" value="CAA56002.1"/>
    <property type="molecule type" value="Genomic_DNA"/>
</dbReference>
<dbReference type="EMBL" id="Z35859">
    <property type="protein sequence ID" value="CAA84920.1"/>
    <property type="molecule type" value="Genomic_DNA"/>
</dbReference>
<dbReference type="EMBL" id="AY692951">
    <property type="protein sequence ID" value="AAT92970.1"/>
    <property type="molecule type" value="Genomic_DNA"/>
</dbReference>
<dbReference type="EMBL" id="BK006936">
    <property type="protein sequence ID" value="DAA07027.1"/>
    <property type="molecule type" value="Genomic_DNA"/>
</dbReference>
<dbReference type="PIR" id="S45402">
    <property type="entry name" value="S45402"/>
</dbReference>
<dbReference type="RefSeq" id="NP_009454.1">
    <property type="nucleotide sequence ID" value="NM_001178338.1"/>
</dbReference>
<dbReference type="PDB" id="4J2W">
    <property type="method" value="X-ray"/>
    <property type="resolution" value="2.60 A"/>
    <property type="chains" value="A/B=1-396"/>
</dbReference>
<dbReference type="PDB" id="4J31">
    <property type="method" value="X-ray"/>
    <property type="resolution" value="2.40 A"/>
    <property type="chains" value="A/B=1-396"/>
</dbReference>
<dbReference type="PDB" id="4J33">
    <property type="method" value="X-ray"/>
    <property type="resolution" value="1.82 A"/>
    <property type="chains" value="A/B=1-394"/>
</dbReference>
<dbReference type="PDB" id="4J34">
    <property type="method" value="X-ray"/>
    <property type="resolution" value="2.03 A"/>
    <property type="chains" value="A/B=1-394"/>
</dbReference>
<dbReference type="PDB" id="4J36">
    <property type="method" value="X-ray"/>
    <property type="resolution" value="2.13 A"/>
    <property type="chains" value="A/B=1-394"/>
</dbReference>
<dbReference type="PDB" id="5X6R">
    <property type="method" value="X-ray"/>
    <property type="resolution" value="1.91 A"/>
    <property type="chains" value="A/B=1-394"/>
</dbReference>
<dbReference type="PDBsum" id="4J2W"/>
<dbReference type="PDBsum" id="4J31"/>
<dbReference type="PDBsum" id="4J33"/>
<dbReference type="PDBsum" id="4J34"/>
<dbReference type="PDBsum" id="4J36"/>
<dbReference type="PDBsum" id="5X6R"/>
<dbReference type="SMR" id="P38169"/>
<dbReference type="BioGRID" id="32607">
    <property type="interactions" value="117"/>
</dbReference>
<dbReference type="DIP" id="DIP-5165N"/>
<dbReference type="FunCoup" id="P38169">
    <property type="interactions" value="972"/>
</dbReference>
<dbReference type="IntAct" id="P38169">
    <property type="interactions" value="18"/>
</dbReference>
<dbReference type="STRING" id="4932.YBL098W"/>
<dbReference type="BindingDB" id="P38169"/>
<dbReference type="ChEMBL" id="CHEMBL3627588"/>
<dbReference type="iPTMnet" id="P38169"/>
<dbReference type="PaxDb" id="4932-YBL098W"/>
<dbReference type="PeptideAtlas" id="P38169"/>
<dbReference type="EnsemblFungi" id="YBL098W_mRNA">
    <property type="protein sequence ID" value="YBL098W"/>
    <property type="gene ID" value="YBL098W"/>
</dbReference>
<dbReference type="GeneID" id="852179"/>
<dbReference type="KEGG" id="sce:YBL098W"/>
<dbReference type="AGR" id="SGD:S000000194"/>
<dbReference type="SGD" id="S000000194">
    <property type="gene designation" value="BNA4"/>
</dbReference>
<dbReference type="VEuPathDB" id="FungiDB:YBL098W"/>
<dbReference type="eggNOG" id="KOG2614">
    <property type="taxonomic scope" value="Eukaryota"/>
</dbReference>
<dbReference type="GeneTree" id="ENSGT00390000000747"/>
<dbReference type="HOGENOM" id="CLU_023210_0_1_1"/>
<dbReference type="InParanoid" id="P38169"/>
<dbReference type="OMA" id="REFMFIA"/>
<dbReference type="OrthoDB" id="10053569at2759"/>
<dbReference type="BioCyc" id="MetaCyc:YBL098W-MONOMER"/>
<dbReference type="BioCyc" id="YEAST:YBL098W-MONOMER"/>
<dbReference type="BRENDA" id="1.14.13.9">
    <property type="organism ID" value="984"/>
</dbReference>
<dbReference type="Reactome" id="R-SCE-71240">
    <property type="pathway name" value="Tryptophan catabolism"/>
</dbReference>
<dbReference type="UniPathway" id="UPA00253">
    <property type="reaction ID" value="UER00328"/>
</dbReference>
<dbReference type="BioGRID-ORCS" id="852179">
    <property type="hits" value="9 hits in 10 CRISPR screens"/>
</dbReference>
<dbReference type="EvolutionaryTrace" id="P38169"/>
<dbReference type="PRO" id="PR:P38169"/>
<dbReference type="Proteomes" id="UP000002311">
    <property type="component" value="Chromosome II"/>
</dbReference>
<dbReference type="RNAct" id="P38169">
    <property type="molecule type" value="protein"/>
</dbReference>
<dbReference type="GO" id="GO:0005741">
    <property type="term" value="C:mitochondrial outer membrane"/>
    <property type="evidence" value="ECO:0007005"/>
    <property type="project" value="SGD"/>
</dbReference>
<dbReference type="GO" id="GO:0005739">
    <property type="term" value="C:mitochondrion"/>
    <property type="evidence" value="ECO:0007005"/>
    <property type="project" value="SGD"/>
</dbReference>
<dbReference type="GO" id="GO:0005777">
    <property type="term" value="C:peroxisome"/>
    <property type="evidence" value="ECO:0000314"/>
    <property type="project" value="SGD"/>
</dbReference>
<dbReference type="GO" id="GO:0071949">
    <property type="term" value="F:FAD binding"/>
    <property type="evidence" value="ECO:0000314"/>
    <property type="project" value="UniProtKB"/>
</dbReference>
<dbReference type="GO" id="GO:0050660">
    <property type="term" value="F:flavin adenine dinucleotide binding"/>
    <property type="evidence" value="ECO:0000314"/>
    <property type="project" value="UniProtKB"/>
</dbReference>
<dbReference type="GO" id="GO:0004502">
    <property type="term" value="F:kynurenine 3-monooxygenase activity"/>
    <property type="evidence" value="ECO:0000314"/>
    <property type="project" value="UniProtKB"/>
</dbReference>
<dbReference type="GO" id="GO:0016174">
    <property type="term" value="F:NAD(P)H oxidase H2O2-forming activity"/>
    <property type="evidence" value="ECO:0000314"/>
    <property type="project" value="UniProtKB"/>
</dbReference>
<dbReference type="GO" id="GO:0034354">
    <property type="term" value="P:'de novo' NAD biosynthetic process from L-tryptophan"/>
    <property type="evidence" value="ECO:0000316"/>
    <property type="project" value="SGD"/>
</dbReference>
<dbReference type="GO" id="GO:0043420">
    <property type="term" value="P:anthranilate metabolic process"/>
    <property type="evidence" value="ECO:0007669"/>
    <property type="project" value="UniProtKB-UniRule"/>
</dbReference>
<dbReference type="GO" id="GO:0070189">
    <property type="term" value="P:kynurenine metabolic process"/>
    <property type="evidence" value="ECO:0000314"/>
    <property type="project" value="UniProtKB"/>
</dbReference>
<dbReference type="GO" id="GO:0006569">
    <property type="term" value="P:L-tryptophan catabolic process"/>
    <property type="evidence" value="ECO:0007669"/>
    <property type="project" value="UniProtKB-UniRule"/>
</dbReference>
<dbReference type="GO" id="GO:0019674">
    <property type="term" value="P:NAD metabolic process"/>
    <property type="evidence" value="ECO:0000314"/>
    <property type="project" value="UniProtKB"/>
</dbReference>
<dbReference type="GO" id="GO:0019805">
    <property type="term" value="P:quinolinate biosynthetic process"/>
    <property type="evidence" value="ECO:0007669"/>
    <property type="project" value="UniProtKB-UniRule"/>
</dbReference>
<dbReference type="FunFam" id="3.50.50.60:FF:000129">
    <property type="entry name" value="Kynurenine 3-monooxygenase"/>
    <property type="match status" value="1"/>
</dbReference>
<dbReference type="Gene3D" id="3.50.50.60">
    <property type="entry name" value="FAD/NAD(P)-binding domain"/>
    <property type="match status" value="1"/>
</dbReference>
<dbReference type="HAMAP" id="MF_01971">
    <property type="entry name" value="Kynurenine_monooxygenase"/>
    <property type="match status" value="1"/>
</dbReference>
<dbReference type="InterPro" id="IPR002938">
    <property type="entry name" value="FAD-bd"/>
</dbReference>
<dbReference type="InterPro" id="IPR036188">
    <property type="entry name" value="FAD/NAD-bd_sf"/>
</dbReference>
<dbReference type="InterPro" id="IPR027545">
    <property type="entry name" value="Kynurenine_monooxygenase"/>
</dbReference>
<dbReference type="PANTHER" id="PTHR46028">
    <property type="entry name" value="KYNURENINE 3-MONOOXYGENASE"/>
    <property type="match status" value="1"/>
</dbReference>
<dbReference type="PANTHER" id="PTHR46028:SF2">
    <property type="entry name" value="KYNURENINE 3-MONOOXYGENASE"/>
    <property type="match status" value="1"/>
</dbReference>
<dbReference type="Pfam" id="PF01494">
    <property type="entry name" value="FAD_binding_3"/>
    <property type="match status" value="1"/>
</dbReference>
<dbReference type="PRINTS" id="PR00420">
    <property type="entry name" value="RNGMNOXGNASE"/>
</dbReference>
<dbReference type="SUPFAM" id="SSF51905">
    <property type="entry name" value="FAD/NAD(P)-binding domain"/>
    <property type="match status" value="1"/>
</dbReference>
<name>KMO_YEAST</name>
<organism>
    <name type="scientific">Saccharomyces cerevisiae (strain ATCC 204508 / S288c)</name>
    <name type="common">Baker's yeast</name>
    <dbReference type="NCBI Taxonomy" id="559292"/>
    <lineage>
        <taxon>Eukaryota</taxon>
        <taxon>Fungi</taxon>
        <taxon>Dikarya</taxon>
        <taxon>Ascomycota</taxon>
        <taxon>Saccharomycotina</taxon>
        <taxon>Saccharomycetes</taxon>
        <taxon>Saccharomycetales</taxon>
        <taxon>Saccharomycetaceae</taxon>
        <taxon>Saccharomyces</taxon>
    </lineage>
</organism>
<evidence type="ECO:0000250" key="1">
    <source>
        <dbReference type="UniProtKB" id="Q84HF5"/>
    </source>
</evidence>
<evidence type="ECO:0000255" key="2">
    <source>
        <dbReference type="HAMAP-Rule" id="MF_03018"/>
    </source>
</evidence>
<evidence type="ECO:0000269" key="3">
    <source>
    </source>
</evidence>
<evidence type="ECO:0000269" key="4">
    <source>
    </source>
</evidence>
<evidence type="ECO:0000269" key="5">
    <source>
    </source>
</evidence>
<evidence type="ECO:0000269" key="6">
    <source>
    </source>
</evidence>
<evidence type="ECO:0000269" key="7">
    <source>
    </source>
</evidence>
<evidence type="ECO:0000269" key="8">
    <source>
    </source>
</evidence>
<evidence type="ECO:0000269" key="9">
    <source>
    </source>
</evidence>
<evidence type="ECO:0000269" key="10">
    <source>
    </source>
</evidence>
<evidence type="ECO:0007744" key="11">
    <source>
        <dbReference type="PDB" id="4J2W"/>
    </source>
</evidence>
<evidence type="ECO:0007744" key="12">
    <source>
        <dbReference type="PDB" id="4J31"/>
    </source>
</evidence>
<evidence type="ECO:0007744" key="13">
    <source>
        <dbReference type="PDB" id="4J33"/>
    </source>
</evidence>
<evidence type="ECO:0007744" key="14">
    <source>
        <dbReference type="PDB" id="4J34"/>
    </source>
</evidence>
<evidence type="ECO:0007744" key="15">
    <source>
        <dbReference type="PDB" id="4J36"/>
    </source>
</evidence>
<evidence type="ECO:0007744" key="16">
    <source>
        <dbReference type="PDB" id="5X6R"/>
    </source>
</evidence>
<evidence type="ECO:0007829" key="17">
    <source>
        <dbReference type="PDB" id="4J33"/>
    </source>
</evidence>
<evidence type="ECO:0007829" key="18">
    <source>
        <dbReference type="PDB" id="4J34"/>
    </source>
</evidence>
<evidence type="ECO:0007829" key="19">
    <source>
        <dbReference type="PDB" id="5X6R"/>
    </source>
</evidence>
<keyword id="KW-0002">3D-structure</keyword>
<keyword id="KW-0274">FAD</keyword>
<keyword id="KW-0285">Flavoprotein</keyword>
<keyword id="KW-0472">Membrane</keyword>
<keyword id="KW-0496">Mitochondrion</keyword>
<keyword id="KW-1000">Mitochondrion outer membrane</keyword>
<keyword id="KW-0503">Monooxygenase</keyword>
<keyword id="KW-0521">NADP</keyword>
<keyword id="KW-0560">Oxidoreductase</keyword>
<keyword id="KW-0662">Pyridine nucleotide biosynthesis</keyword>
<keyword id="KW-1185">Reference proteome</keyword>
<comment type="function">
    <text evidence="2 3 7 9">Catalyzes the hydroxylation of L-kynurenine (L-Kyn) to form 3-hydroxy-L-kynurenine (L-3OHKyn). Required for synthesis of quinolinic acid.</text>
</comment>
<comment type="catalytic activity">
    <reaction evidence="2 10">
        <text>L-kynurenine + NADPH + O2 + H(+) = 3-hydroxy-L-kynurenine + NADP(+) + H2O</text>
        <dbReference type="Rhea" id="RHEA:20545"/>
        <dbReference type="ChEBI" id="CHEBI:15377"/>
        <dbReference type="ChEBI" id="CHEBI:15378"/>
        <dbReference type="ChEBI" id="CHEBI:15379"/>
        <dbReference type="ChEBI" id="CHEBI:57783"/>
        <dbReference type="ChEBI" id="CHEBI:57959"/>
        <dbReference type="ChEBI" id="CHEBI:58125"/>
        <dbReference type="ChEBI" id="CHEBI:58349"/>
        <dbReference type="EC" id="1.14.13.9"/>
    </reaction>
</comment>
<comment type="cofactor">
    <cofactor evidence="10">
        <name>FAD</name>
        <dbReference type="ChEBI" id="CHEBI:57692"/>
    </cofactor>
</comment>
<comment type="pathway">
    <text evidence="2 3 10">Cofactor biosynthesis; NAD(+) biosynthesis; quinolinate from L-kynurenine: step 1/3.</text>
</comment>
<comment type="subcellular location">
    <subcellularLocation>
        <location evidence="2 4 6 8">Mitochondrion outer membrane</location>
    </subcellularLocation>
</comment>
<comment type="miscellaneous">
    <text evidence="5">Present with 556 molecules/cell in log phase SD medium.</text>
</comment>
<comment type="miscellaneous">
    <text>Deletion of BNA4 suppresses the toxicity of a mutant HD/HTT fragment.</text>
</comment>
<comment type="similarity">
    <text evidence="2">Belongs to the aromatic-ring hydroxylase family. KMO subfamily.</text>
</comment>
<accession>P38169</accession>
<accession>D6VPQ7</accession>
<protein>
    <recommendedName>
        <fullName evidence="2">Kynurenine 3-monooxygenase</fullName>
        <ecNumber evidence="2">1.14.13.9</ecNumber>
    </recommendedName>
    <alternativeName>
        <fullName evidence="2">Biosynthesis of nicotinic acid protein 4</fullName>
    </alternativeName>
    <alternativeName>
        <fullName evidence="2">Kynurenine 3-hydroxylase</fullName>
    </alternativeName>
</protein>
<feature type="chain" id="PRO_0000020823" description="Kynurenine 3-monooxygenase">
    <location>
        <begin position="1"/>
        <end position="460"/>
    </location>
</feature>
<feature type="binding site" evidence="11 12 13 14 15">
    <location>
        <position position="13"/>
    </location>
    <ligand>
        <name>FAD</name>
        <dbReference type="ChEBI" id="CHEBI:57692"/>
    </ligand>
</feature>
<feature type="binding site" evidence="11 12 13 14 15">
    <location>
        <begin position="32"/>
        <end position="34"/>
    </location>
    <ligand>
        <name>FAD</name>
        <dbReference type="ChEBI" id="CHEBI:57692"/>
    </ligand>
</feature>
<feature type="binding site" evidence="11 12 13 14 15">
    <location>
        <position position="53"/>
    </location>
    <ligand>
        <name>FAD</name>
        <dbReference type="ChEBI" id="CHEBI:57692"/>
    </ligand>
</feature>
<feature type="binding site" evidence="1">
    <location>
        <position position="83"/>
    </location>
    <ligand>
        <name>L-kynurenine</name>
        <dbReference type="ChEBI" id="CHEBI:57959"/>
    </ligand>
</feature>
<feature type="binding site" evidence="1">
    <location>
        <position position="97"/>
    </location>
    <ligand>
        <name>L-kynurenine</name>
        <dbReference type="ChEBI" id="CHEBI:57959"/>
    </ligand>
</feature>
<feature type="binding site" evidence="11 12 13 14 15">
    <location>
        <position position="109"/>
    </location>
    <ligand>
        <name>FAD</name>
        <dbReference type="ChEBI" id="CHEBI:57692"/>
    </ligand>
</feature>
<feature type="binding site" evidence="11 12 13 14 15">
    <location>
        <position position="133"/>
    </location>
    <ligand>
        <name>FAD</name>
        <dbReference type="ChEBI" id="CHEBI:57692"/>
    </ligand>
</feature>
<feature type="binding site" evidence="13">
    <location>
        <position position="195"/>
    </location>
    <ligand>
        <name>FAD</name>
        <dbReference type="ChEBI" id="CHEBI:57692"/>
    </ligand>
</feature>
<feature type="binding site" evidence="11 12 13 14 15">
    <location>
        <position position="314"/>
    </location>
    <ligand>
        <name>FAD</name>
        <dbReference type="ChEBI" id="CHEBI:57692"/>
    </ligand>
</feature>
<feature type="binding site" evidence="11 12 13 14 15">
    <location>
        <begin position="325"/>
        <end position="328"/>
    </location>
    <ligand>
        <name>FAD</name>
        <dbReference type="ChEBI" id="CHEBI:57692"/>
    </ligand>
</feature>
<feature type="binding site" evidence="1">
    <location>
        <position position="373"/>
    </location>
    <ligand>
        <name>L-kynurenine</name>
        <dbReference type="ChEBI" id="CHEBI:57959"/>
    </ligand>
</feature>
<feature type="binding site" evidence="1">
    <location>
        <position position="408"/>
    </location>
    <ligand>
        <name>L-kynurenine</name>
        <dbReference type="ChEBI" id="CHEBI:57959"/>
    </ligand>
</feature>
<feature type="mutagenesis site" description="Strongly decreases enzymatic activity." evidence="9">
    <original>R</original>
    <variation>A</variation>
    <location>
        <position position="83"/>
    </location>
</feature>
<feature type="mutagenesis site" description="Abolsihes enzymatic activity." evidence="9">
    <original>R</original>
    <variation>M</variation>
    <location>
        <position position="83"/>
    </location>
</feature>
<feature type="mutagenesis site" description="Abolishes NADPH oxidase activity." evidence="10">
    <original>FY</original>
    <variation>AA</variation>
    <location>
        <begin position="322"/>
        <end position="323"/>
    </location>
</feature>
<feature type="strand" evidence="17">
    <location>
        <begin position="4"/>
        <end position="8"/>
    </location>
</feature>
<feature type="helix" evidence="17">
    <location>
        <begin position="12"/>
        <end position="23"/>
    </location>
</feature>
<feature type="strand" evidence="17">
    <location>
        <begin position="27"/>
        <end position="34"/>
    </location>
</feature>
<feature type="strand" evidence="17">
    <location>
        <begin position="39"/>
        <end position="41"/>
    </location>
</feature>
<feature type="strand" evidence="17">
    <location>
        <begin position="50"/>
        <end position="55"/>
    </location>
</feature>
<feature type="helix" evidence="17">
    <location>
        <begin position="56"/>
        <end position="65"/>
    </location>
</feature>
<feature type="helix" evidence="17">
    <location>
        <begin position="67"/>
        <end position="73"/>
    </location>
</feature>
<feature type="turn" evidence="17">
    <location>
        <begin position="74"/>
        <end position="76"/>
    </location>
</feature>
<feature type="strand" evidence="17">
    <location>
        <begin position="82"/>
        <end position="86"/>
    </location>
</feature>
<feature type="strand" evidence="17">
    <location>
        <begin position="92"/>
        <end position="96"/>
    </location>
</feature>
<feature type="strand" evidence="18">
    <location>
        <begin position="99"/>
        <end position="101"/>
    </location>
</feature>
<feature type="strand" evidence="17">
    <location>
        <begin position="104"/>
        <end position="108"/>
    </location>
</feature>
<feature type="helix" evidence="17">
    <location>
        <begin position="109"/>
        <end position="120"/>
    </location>
</feature>
<feature type="turn" evidence="17">
    <location>
        <begin position="121"/>
        <end position="124"/>
    </location>
</feature>
<feature type="strand" evidence="17">
    <location>
        <begin position="126"/>
        <end position="129"/>
    </location>
</feature>
<feature type="strand" evidence="17">
    <location>
        <begin position="131"/>
        <end position="137"/>
    </location>
</feature>
<feature type="strand" evidence="17">
    <location>
        <begin position="143"/>
        <end position="149"/>
    </location>
</feature>
<feature type="turn" evidence="17">
    <location>
        <begin position="151"/>
        <end position="153"/>
    </location>
</feature>
<feature type="strand" evidence="17">
    <location>
        <begin position="156"/>
        <end position="166"/>
    </location>
</feature>
<feature type="helix" evidence="17">
    <location>
        <begin position="173"/>
        <end position="179"/>
    </location>
</feature>
<feature type="strand" evidence="17">
    <location>
        <begin position="185"/>
        <end position="190"/>
    </location>
</feature>
<feature type="strand" evidence="17">
    <location>
        <begin position="194"/>
        <end position="200"/>
    </location>
</feature>
<feature type="turn" evidence="17">
    <location>
        <begin position="208"/>
        <end position="210"/>
    </location>
</feature>
<feature type="strand" evidence="17">
    <location>
        <begin position="211"/>
        <end position="213"/>
    </location>
</feature>
<feature type="strand" evidence="17">
    <location>
        <begin position="220"/>
        <end position="225"/>
    </location>
</feature>
<feature type="strand" evidence="17">
    <location>
        <begin position="230"/>
        <end position="235"/>
    </location>
</feature>
<feature type="strand" evidence="17">
    <location>
        <begin position="241"/>
        <end position="247"/>
    </location>
</feature>
<feature type="helix" evidence="17">
    <location>
        <begin position="249"/>
        <end position="255"/>
    </location>
</feature>
<feature type="helix" evidence="17">
    <location>
        <begin position="259"/>
        <end position="269"/>
    </location>
</feature>
<feature type="helix" evidence="17">
    <location>
        <begin position="271"/>
        <end position="273"/>
    </location>
</feature>
<feature type="turn" evidence="17">
    <location>
        <begin position="274"/>
        <end position="276"/>
    </location>
</feature>
<feature type="helix" evidence="17">
    <location>
        <begin position="279"/>
        <end position="288"/>
    </location>
</feature>
<feature type="strand" evidence="17">
    <location>
        <begin position="295"/>
        <end position="300"/>
    </location>
</feature>
<feature type="strand" evidence="19">
    <location>
        <begin position="302"/>
        <end position="304"/>
    </location>
</feature>
<feature type="turn" evidence="17">
    <location>
        <begin position="305"/>
        <end position="308"/>
    </location>
</feature>
<feature type="strand" evidence="17">
    <location>
        <begin position="309"/>
        <end position="311"/>
    </location>
</feature>
<feature type="helix" evidence="17">
    <location>
        <begin position="314"/>
        <end position="317"/>
    </location>
</feature>
<feature type="turn" evidence="17">
    <location>
        <begin position="321"/>
        <end position="323"/>
    </location>
</feature>
<feature type="helix" evidence="17">
    <location>
        <begin position="326"/>
        <end position="343"/>
    </location>
</feature>
<feature type="turn" evidence="17">
    <location>
        <begin position="344"/>
        <end position="346"/>
    </location>
</feature>
<feature type="helix" evidence="17">
    <location>
        <begin position="348"/>
        <end position="377"/>
    </location>
</feature>
<feature type="turn" evidence="17">
    <location>
        <begin position="384"/>
        <end position="386"/>
    </location>
</feature>
<sequence>MSESVAIIGAGLVGCLAALAFSKEGYNVTLYDFRQDPRLDTTKNKNLKSINLAISARGIDALKSIDPDACEHILQDMIPMKGRMIHDLKGRQESQLYGLHGEAINSINRSVLNNSLLDELEKSTTELKFGHKLVKIEWTDDKQICHFAIGEDLKTPHTEKYDFVIGCDGAYSATRSQMQRKVEMDFSQEYMNLRYIELYIPPTEEFKPNYGGNFAIAPDHLHIWPRHKFMLIALANSDGSFTSTFFGSKDQISDLITSKSRVREFLIENFPDIINIMDLDDAVKRFITYPKESLVCVNCKPYDVPGGKAILLGDAAHAMVPFYGQGMNCGFEDVRILMALLKKHSGDRSRAFTEYTQTRHKDLVSITELAKRNYKEMSHDVTSKRFLLRKKLDALFSIIMKDKWIPLYTMISFRSDISYSRALERAGKQTRILKFLESLTLGMLSIGGYKLFKFLTRERS</sequence>
<proteinExistence type="evidence at protein level"/>
<reference key="1">
    <citation type="journal article" date="1995" name="Yeast">
        <title>Sequence analysis of a 78.6 kb segment of the left end of Saccharomyces cerevisiae chromosome II.</title>
        <authorList>
            <person name="Obermaier B."/>
            <person name="Gassenhuber J."/>
            <person name="Piravandi E."/>
            <person name="Domdey H."/>
        </authorList>
    </citation>
    <scope>NUCLEOTIDE SEQUENCE [GENOMIC DNA]</scope>
    <source>
        <strain>ATCC 204508 / S288c</strain>
    </source>
</reference>
<reference key="2">
    <citation type="journal article" date="1994" name="EMBO J.">
        <title>Complete DNA sequence of yeast chromosome II.</title>
        <authorList>
            <person name="Feldmann H."/>
            <person name="Aigle M."/>
            <person name="Aljinovic G."/>
            <person name="Andre B."/>
            <person name="Baclet M.C."/>
            <person name="Barthe C."/>
            <person name="Baur A."/>
            <person name="Becam A.-M."/>
            <person name="Biteau N."/>
            <person name="Boles E."/>
            <person name="Brandt T."/>
            <person name="Brendel M."/>
            <person name="Brueckner M."/>
            <person name="Bussereau F."/>
            <person name="Christiansen C."/>
            <person name="Contreras R."/>
            <person name="Crouzet M."/>
            <person name="Cziepluch C."/>
            <person name="Demolis N."/>
            <person name="Delaveau T."/>
            <person name="Doignon F."/>
            <person name="Domdey H."/>
            <person name="Duesterhus S."/>
            <person name="Dubois E."/>
            <person name="Dujon B."/>
            <person name="El Bakkoury M."/>
            <person name="Entian K.-D."/>
            <person name="Feuermann M."/>
            <person name="Fiers W."/>
            <person name="Fobo G.M."/>
            <person name="Fritz C."/>
            <person name="Gassenhuber J."/>
            <person name="Glansdorff N."/>
            <person name="Goffeau A."/>
            <person name="Grivell L.A."/>
            <person name="de Haan M."/>
            <person name="Hein C."/>
            <person name="Herbert C.J."/>
            <person name="Hollenberg C.P."/>
            <person name="Holmstroem K."/>
            <person name="Jacq C."/>
            <person name="Jacquet M."/>
            <person name="Jauniaux J.-C."/>
            <person name="Jonniaux J.-L."/>
            <person name="Kallesoee T."/>
            <person name="Kiesau P."/>
            <person name="Kirchrath L."/>
            <person name="Koetter P."/>
            <person name="Korol S."/>
            <person name="Liebl S."/>
            <person name="Logghe M."/>
            <person name="Lohan A.J.E."/>
            <person name="Louis E.J."/>
            <person name="Li Z.Y."/>
            <person name="Maat M.J."/>
            <person name="Mallet L."/>
            <person name="Mannhaupt G."/>
            <person name="Messenguy F."/>
            <person name="Miosga T."/>
            <person name="Molemans F."/>
            <person name="Mueller S."/>
            <person name="Nasr F."/>
            <person name="Obermaier B."/>
            <person name="Perea J."/>
            <person name="Pierard A."/>
            <person name="Piravandi E."/>
            <person name="Pohl F.M."/>
            <person name="Pohl T.M."/>
            <person name="Potier S."/>
            <person name="Proft M."/>
            <person name="Purnelle B."/>
            <person name="Ramezani Rad M."/>
            <person name="Rieger M."/>
            <person name="Rose M."/>
            <person name="Schaaff-Gerstenschlaeger I."/>
            <person name="Scherens B."/>
            <person name="Schwarzlose C."/>
            <person name="Skala J."/>
            <person name="Slonimski P.P."/>
            <person name="Smits P.H.M."/>
            <person name="Souciet J.-L."/>
            <person name="Steensma H.Y."/>
            <person name="Stucka R."/>
            <person name="Urrestarazu L.A."/>
            <person name="van der Aart Q.J.M."/>
            <person name="Van Dyck L."/>
            <person name="Vassarotti A."/>
            <person name="Vetter I."/>
            <person name="Vierendeels F."/>
            <person name="Vissers S."/>
            <person name="Wagner G."/>
            <person name="de Wergifosse P."/>
            <person name="Wolfe K.H."/>
            <person name="Zagulski M."/>
            <person name="Zimmermann F.K."/>
            <person name="Mewes H.-W."/>
            <person name="Kleine K."/>
        </authorList>
    </citation>
    <scope>NUCLEOTIDE SEQUENCE [LARGE SCALE GENOMIC DNA]</scope>
    <source>
        <strain>ATCC 204508 / S288c</strain>
    </source>
</reference>
<reference key="3">
    <citation type="journal article" date="2014" name="G3 (Bethesda)">
        <title>The reference genome sequence of Saccharomyces cerevisiae: Then and now.</title>
        <authorList>
            <person name="Engel S.R."/>
            <person name="Dietrich F.S."/>
            <person name="Fisk D.G."/>
            <person name="Binkley G."/>
            <person name="Balakrishnan R."/>
            <person name="Costanzo M.C."/>
            <person name="Dwight S.S."/>
            <person name="Hitz B.C."/>
            <person name="Karra K."/>
            <person name="Nash R.S."/>
            <person name="Weng S."/>
            <person name="Wong E.D."/>
            <person name="Lloyd P."/>
            <person name="Skrzypek M.S."/>
            <person name="Miyasato S.R."/>
            <person name="Simison M."/>
            <person name="Cherry J.M."/>
        </authorList>
    </citation>
    <scope>GENOME REANNOTATION</scope>
    <source>
        <strain>ATCC 204508 / S288c</strain>
    </source>
</reference>
<reference key="4">
    <citation type="journal article" date="2007" name="Genome Res.">
        <title>Approaching a complete repository of sequence-verified protein-encoding clones for Saccharomyces cerevisiae.</title>
        <authorList>
            <person name="Hu Y."/>
            <person name="Rolfs A."/>
            <person name="Bhullar B."/>
            <person name="Murthy T.V.S."/>
            <person name="Zhu C."/>
            <person name="Berger M.F."/>
            <person name="Camargo A.A."/>
            <person name="Kelley F."/>
            <person name="McCarron S."/>
            <person name="Jepson D."/>
            <person name="Richardson A."/>
            <person name="Raphael J."/>
            <person name="Moreira D."/>
            <person name="Taycher E."/>
            <person name="Zuo D."/>
            <person name="Mohr S."/>
            <person name="Kane M.F."/>
            <person name="Williamson J."/>
            <person name="Simpson A.J.G."/>
            <person name="Bulyk M.L."/>
            <person name="Harlow E."/>
            <person name="Marsischky G."/>
            <person name="Kolodner R.D."/>
            <person name="LaBaer J."/>
        </authorList>
    </citation>
    <scope>NUCLEOTIDE SEQUENCE [GENOMIC DNA]</scope>
    <source>
        <strain>ATCC 204508 / S288c</strain>
    </source>
</reference>
<reference key="5">
    <citation type="journal article" date="2002" name="FEBS Lett.">
        <title>Aerobic and anaerobic NAD+ metabolism in Saccharomyces cerevisiae.</title>
        <authorList>
            <person name="Panozzo C."/>
            <person name="Nawara M."/>
            <person name="Suski C."/>
            <person name="Kucharczyka R."/>
            <person name="Skoneczny M."/>
            <person name="Becam A.-M."/>
            <person name="Rytka J."/>
            <person name="Herbert C.J."/>
        </authorList>
    </citation>
    <scope>FUNCTION</scope>
    <scope>PATHWAY</scope>
</reference>
<reference key="6">
    <citation type="journal article" date="2006" name="Mol. Biol. Cell">
        <title>Proteomic analysis of the yeast mitochondrial outer membrane reveals accumulation of a subclass of preproteins.</title>
        <authorList>
            <person name="Zahedi R.P."/>
            <person name="Sickmann A."/>
            <person name="Boehm A.M."/>
            <person name="Winkler C."/>
            <person name="Zufall N."/>
            <person name="Schoenfisch B."/>
            <person name="Guiard B."/>
            <person name="Pfanner N."/>
            <person name="Meisinger C."/>
        </authorList>
    </citation>
    <scope>SUBCELLULAR LOCATION</scope>
    <scope>IDENTIFICATION BY MASS SPECTROMETRY</scope>
</reference>
<reference key="7">
    <citation type="journal article" date="2003" name="Proc. Natl. Acad. Sci. U.S.A.">
        <title>The proteome of Saccharomyces cerevisiae mitochondria.</title>
        <authorList>
            <person name="Sickmann A."/>
            <person name="Reinders J."/>
            <person name="Wagner Y."/>
            <person name="Joppich C."/>
            <person name="Zahedi R.P."/>
            <person name="Meyer H.E."/>
            <person name="Schoenfisch B."/>
            <person name="Perschil I."/>
            <person name="Chacinska A."/>
            <person name="Guiard B."/>
            <person name="Rehling P."/>
            <person name="Pfanner N."/>
            <person name="Meisinger C."/>
        </authorList>
    </citation>
    <scope>SUBCELLULAR LOCATION [LARGE SCALE ANALYSIS]</scope>
    <source>
        <strain>ATCC 76625 / YPH499</strain>
    </source>
</reference>
<reference key="8">
    <citation type="journal article" date="2003" name="Nature">
        <title>Global analysis of protein localization in budding yeast.</title>
        <authorList>
            <person name="Huh W.-K."/>
            <person name="Falvo J.V."/>
            <person name="Gerke L.C."/>
            <person name="Carroll A.S."/>
            <person name="Howson R.W."/>
            <person name="Weissman J.S."/>
            <person name="O'Shea E.K."/>
        </authorList>
    </citation>
    <scope>SUBCELLULAR LOCATION [LARGE SCALE ANALYSIS]</scope>
</reference>
<reference key="9">
    <citation type="journal article" date="2003" name="Nature">
        <title>Global analysis of protein expression in yeast.</title>
        <authorList>
            <person name="Ghaemmaghami S."/>
            <person name="Huh W.-K."/>
            <person name="Bower K."/>
            <person name="Howson R.W."/>
            <person name="Belle A."/>
            <person name="Dephoure N."/>
            <person name="O'Shea E.K."/>
            <person name="Weissman J.S."/>
        </authorList>
    </citation>
    <scope>LEVEL OF PROTEIN EXPRESSION [LARGE SCALE ANALYSIS]</scope>
</reference>
<reference key="10">
    <citation type="journal article" date="2005" name="Nat. Genet.">
        <title>A genomic screen in yeast implicates kynurenine 3-monooxygenase as a therapeutic target for Huntington disease.</title>
        <authorList>
            <person name="Giorgini F."/>
            <person name="Guidetti P."/>
            <person name="Nguyen Q."/>
            <person name="Bennett S.C."/>
            <person name="Muchowski P.J."/>
        </authorList>
    </citation>
    <scope>FUNCTION</scope>
</reference>
<reference evidence="11 12 13 14 15" key="11">
    <citation type="journal article" date="2013" name="Nature">
        <title>Structural basis of kynurenine 3-monooxygenase inhibition.</title>
        <authorList>
            <person name="Amaral M."/>
            <person name="Levy C."/>
            <person name="Heyes D.J."/>
            <person name="Lafite P."/>
            <person name="Outeiro T.F."/>
            <person name="Giorgini F."/>
            <person name="Leys D."/>
            <person name="Scrutton N.S."/>
        </authorList>
    </citation>
    <scope>X-RAY CRYSTALLOGRAPHY (1.82 ANGSTROMS) OF 1-396 IN COMPLEX WITH FAD AND INHIBITOR</scope>
    <scope>FUNCTION</scope>
    <scope>MUTAGENESIS OF ARG-83</scope>
</reference>
<reference evidence="16" key="12">
    <citation type="journal article" date="2018" name="Cell Chem. Biol.">
        <title>Structural Basis for Inhibitor-Induced Hydrogen Peroxide Production by Kynurenine 3-Monooxygenase.</title>
        <authorList>
            <person name="Kim H.T."/>
            <person name="Na B.K."/>
            <person name="Chung J."/>
            <person name="Kim S."/>
            <person name="Kwon S.K."/>
            <person name="Cha H."/>
            <person name="Son J."/>
            <person name="Cho J.M."/>
            <person name="Hwang K.Y."/>
        </authorList>
    </citation>
    <scope>X-RAY CRYSTALLOGRAPHY (1.91 ANGSTROMS) OF 1-394 IN COMPLEX WITH FAD AND INHIBITOR</scope>
    <scope>CATALYTIC ACTIVITY</scope>
    <scope>COFACTOR</scope>
    <scope>PATHWAY</scope>
    <scope>MUTAGENESIS OF 322-PHE-TYR-323</scope>
</reference>
<gene>
    <name evidence="2" type="primary">BNA4</name>
    <name type="ordered locus">YBL098W</name>
    <name type="ORF">YBL0828</name>
</gene>